<name>PORTL_BPMD2</name>
<feature type="chain" id="PRO_0000164716" description="Portal protein">
    <location>
        <begin position="1"/>
        <end position="485"/>
    </location>
</feature>
<feature type="region of interest" description="Disordered" evidence="3">
    <location>
        <begin position="456"/>
        <end position="485"/>
    </location>
</feature>
<feature type="compositionally biased region" description="Pro residues" evidence="3">
    <location>
        <begin position="464"/>
        <end position="476"/>
    </location>
</feature>
<organismHost>
    <name type="scientific">Mycobacterium</name>
    <dbReference type="NCBI Taxonomy" id="1763"/>
</organismHost>
<accession>O64207</accession>
<keyword id="KW-0167">Capsid protein</keyword>
<keyword id="KW-1185">Reference proteome</keyword>
<keyword id="KW-0118">Viral capsid assembly</keyword>
<keyword id="KW-1171">Viral genome ejection through host cell envelope</keyword>
<keyword id="KW-0231">Viral genome packaging</keyword>
<keyword id="KW-1243">Viral long flexible tail ejection system</keyword>
<keyword id="KW-1162">Viral penetration into host cytoplasm</keyword>
<keyword id="KW-1188">Viral release from host cell</keyword>
<keyword id="KW-0946">Virion</keyword>
<keyword id="KW-1160">Virus entry into host cell</keyword>
<gene>
    <name type="primary">14</name>
</gene>
<evidence type="ECO:0000250" key="1">
    <source>
        <dbReference type="UniProtKB" id="P03710"/>
    </source>
</evidence>
<evidence type="ECO:0000250" key="2">
    <source>
        <dbReference type="UniProtKB" id="P54309"/>
    </source>
</evidence>
<evidence type="ECO:0000256" key="3">
    <source>
        <dbReference type="SAM" id="MobiDB-lite"/>
    </source>
</evidence>
<evidence type="ECO:0000305" key="4"/>
<protein>
    <recommendedName>
        <fullName evidence="4">Portal protein</fullName>
    </recommendedName>
    <alternativeName>
        <fullName>Gene product 14</fullName>
        <shortName>gp14</shortName>
    </alternativeName>
    <alternativeName>
        <fullName evidence="4">Portal vertex protein</fullName>
    </alternativeName>
</protein>
<dbReference type="EMBL" id="AF022214">
    <property type="protein sequence ID" value="AAC18454.1"/>
    <property type="molecule type" value="Genomic_DNA"/>
</dbReference>
<dbReference type="PIR" id="C72801">
    <property type="entry name" value="C72801"/>
</dbReference>
<dbReference type="RefSeq" id="NP_046829.1">
    <property type="nucleotide sequence ID" value="NC_001900.1"/>
</dbReference>
<dbReference type="SMR" id="O64207"/>
<dbReference type="GeneID" id="1261620"/>
<dbReference type="KEGG" id="vg:1261620"/>
<dbReference type="OrthoDB" id="3592at10239"/>
<dbReference type="Proteomes" id="UP000002131">
    <property type="component" value="Segment"/>
</dbReference>
<dbReference type="GO" id="GO:0019028">
    <property type="term" value="C:viral capsid"/>
    <property type="evidence" value="ECO:0007669"/>
    <property type="project" value="UniProtKB-KW"/>
</dbReference>
<dbReference type="GO" id="GO:0099001">
    <property type="term" value="P:symbiont genome ejection through host cell envelope, long flexible tail mechanism"/>
    <property type="evidence" value="ECO:0007669"/>
    <property type="project" value="UniProtKB-KW"/>
</dbReference>
<dbReference type="InterPro" id="IPR021145">
    <property type="entry name" value="Portal_protein_SPP1_Gp6-like"/>
</dbReference>
<dbReference type="Pfam" id="PF05133">
    <property type="entry name" value="SPP1_portal"/>
    <property type="match status" value="1"/>
</dbReference>
<reference key="1">
    <citation type="journal article" date="1998" name="J. Mol. Biol.">
        <title>Genome structure of mycobacteriophage D29: implications for phage evolution.</title>
        <authorList>
            <person name="Ford M.E."/>
            <person name="Sarkis G.J."/>
            <person name="Belanger A.E."/>
            <person name="Hendrix R.W."/>
            <person name="Hatfull G.F."/>
        </authorList>
    </citation>
    <scope>NUCLEOTIDE SEQUENCE [LARGE SCALE GENOMIC DNA]</scope>
</reference>
<sequence length="485" mass="53540">MTAPLPGQEEIADPAIARDEMVSAFEDQNQNLRSNTSYYEAERRPEAIGVTVPVQMQSLLAHVGYPRLYVDSIAERQAVEGFRLGDADEADEELWQWWQANNLDIEAPLGYTDAYVHGRSYITISRPDPQIDLGWDPNVPLIRVEPPTRMYAEIDPRIGRPAKAIRVAYDAEGNEIQAATLYTPNETFGWFRAEGEWVEWFSDPHGLGAVPVVPLPNRTRLSDLYGTSEITPELRSMTDAAARILMLMQATAELMGVPQRLIFGIKPEEIGVDPETGQTLFDAYLARILAFEDAEGKIQQFSAAELANFTNALDQIAKQVAAYTGLPPQYLSTAADNPASAEAIRAAESRLIKKVERKNAIFGGAWEEAMRLAYRLMKGGDVPPDMLRMETVWRDPSTPTYAAKADAATKLYGNGQGVIPRERARKDMGYSIAEREEMRRWDEEEAAMGLGLLGTMVDADPTVPGSPNPTPAPKPQPAIEGGDSA</sequence>
<proteinExistence type="inferred from homology"/>
<comment type="function">
    <text evidence="2">Forms the portal vertex of the capsid. This portal plays critical roles in head assembly, genome packaging, neck/tail attachment, and genome ejection. The portal protein multimerizes as a single ring-shaped homododecamer arranged around a central channel. Binds to the terminase subunits to form the packaging machine.</text>
</comment>
<comment type="subunit">
    <text evidence="2">Homododecamer.</text>
</comment>
<comment type="subcellular location">
    <subcellularLocation>
        <location evidence="1">Virion</location>
    </subcellularLocation>
</comment>
<comment type="similarity">
    <text evidence="4">Belongs to the SPP1-like portal protein family.</text>
</comment>
<organism>
    <name type="scientific">Mycobacterium phage D29</name>
    <name type="common">Mycobacteriophage D29</name>
    <dbReference type="NCBI Taxonomy" id="28369"/>
    <lineage>
        <taxon>Viruses</taxon>
        <taxon>Duplodnaviria</taxon>
        <taxon>Heunggongvirae</taxon>
        <taxon>Uroviricota</taxon>
        <taxon>Caudoviricetes</taxon>
        <taxon>Fromanvirus</taxon>
    </lineage>
</organism>